<organism>
    <name type="scientific">Rhodococcus opacus (strain B4)</name>
    <dbReference type="NCBI Taxonomy" id="632772"/>
    <lineage>
        <taxon>Bacteria</taxon>
        <taxon>Bacillati</taxon>
        <taxon>Actinomycetota</taxon>
        <taxon>Actinomycetes</taxon>
        <taxon>Mycobacteriales</taxon>
        <taxon>Nocardiaceae</taxon>
        <taxon>Rhodococcus</taxon>
    </lineage>
</organism>
<dbReference type="EC" id="3.6.1.9" evidence="1"/>
<dbReference type="EMBL" id="AP011115">
    <property type="protein sequence ID" value="BAH54601.1"/>
    <property type="molecule type" value="Genomic_DNA"/>
</dbReference>
<dbReference type="RefSeq" id="WP_015890057.1">
    <property type="nucleotide sequence ID" value="NC_012522.1"/>
</dbReference>
<dbReference type="SMR" id="C1B1A6"/>
<dbReference type="STRING" id="632772.ROP_63540"/>
<dbReference type="KEGG" id="rop:ROP_63540"/>
<dbReference type="PATRIC" id="fig|632772.20.peg.6635"/>
<dbReference type="HOGENOM" id="CLU_040416_1_2_11"/>
<dbReference type="OrthoDB" id="3527985at2"/>
<dbReference type="Proteomes" id="UP000002212">
    <property type="component" value="Chromosome"/>
</dbReference>
<dbReference type="GO" id="GO:0005737">
    <property type="term" value="C:cytoplasm"/>
    <property type="evidence" value="ECO:0007669"/>
    <property type="project" value="UniProtKB-SubCell"/>
</dbReference>
<dbReference type="GO" id="GO:0047429">
    <property type="term" value="F:nucleoside triphosphate diphosphatase activity"/>
    <property type="evidence" value="ECO:0007669"/>
    <property type="project" value="UniProtKB-EC"/>
</dbReference>
<dbReference type="GO" id="GO:0009117">
    <property type="term" value="P:nucleotide metabolic process"/>
    <property type="evidence" value="ECO:0007669"/>
    <property type="project" value="UniProtKB-KW"/>
</dbReference>
<dbReference type="CDD" id="cd00555">
    <property type="entry name" value="Maf"/>
    <property type="match status" value="1"/>
</dbReference>
<dbReference type="Gene3D" id="3.90.950.10">
    <property type="match status" value="1"/>
</dbReference>
<dbReference type="HAMAP" id="MF_00528">
    <property type="entry name" value="Maf"/>
    <property type="match status" value="1"/>
</dbReference>
<dbReference type="InterPro" id="IPR029001">
    <property type="entry name" value="ITPase-like_fam"/>
</dbReference>
<dbReference type="InterPro" id="IPR003697">
    <property type="entry name" value="Maf-like"/>
</dbReference>
<dbReference type="NCBIfam" id="TIGR00172">
    <property type="entry name" value="maf"/>
    <property type="match status" value="1"/>
</dbReference>
<dbReference type="PANTHER" id="PTHR43213">
    <property type="entry name" value="BIFUNCTIONAL DTTP/UTP PYROPHOSPHATASE/METHYLTRANSFERASE PROTEIN-RELATED"/>
    <property type="match status" value="1"/>
</dbReference>
<dbReference type="PANTHER" id="PTHR43213:SF5">
    <property type="entry name" value="BIFUNCTIONAL DTTP_UTP PYROPHOSPHATASE_METHYLTRANSFERASE PROTEIN-RELATED"/>
    <property type="match status" value="1"/>
</dbReference>
<dbReference type="Pfam" id="PF02545">
    <property type="entry name" value="Maf"/>
    <property type="match status" value="1"/>
</dbReference>
<dbReference type="PIRSF" id="PIRSF006305">
    <property type="entry name" value="Maf"/>
    <property type="match status" value="1"/>
</dbReference>
<dbReference type="SUPFAM" id="SSF52972">
    <property type="entry name" value="ITPase-like"/>
    <property type="match status" value="1"/>
</dbReference>
<accession>C1B1A6</accession>
<name>NTPP_RHOOB</name>
<keyword id="KW-0963">Cytoplasm</keyword>
<keyword id="KW-0378">Hydrolase</keyword>
<keyword id="KW-0546">Nucleotide metabolism</keyword>
<protein>
    <recommendedName>
        <fullName evidence="1">Nucleoside triphosphate pyrophosphatase</fullName>
        <ecNumber evidence="1">3.6.1.9</ecNumber>
    </recommendedName>
    <alternativeName>
        <fullName evidence="1">Nucleotide pyrophosphatase</fullName>
        <shortName evidence="1">Nucleotide PPase</shortName>
    </alternativeName>
</protein>
<proteinExistence type="inferred from homology"/>
<reference key="1">
    <citation type="submission" date="2009-03" db="EMBL/GenBank/DDBJ databases">
        <title>Comparison of the complete genome sequences of Rhodococcus erythropolis PR4 and Rhodococcus opacus B4.</title>
        <authorList>
            <person name="Takarada H."/>
            <person name="Sekine M."/>
            <person name="Hosoyama A."/>
            <person name="Yamada R."/>
            <person name="Fujisawa T."/>
            <person name="Omata S."/>
            <person name="Shimizu A."/>
            <person name="Tsukatani N."/>
            <person name="Tanikawa S."/>
            <person name="Fujita N."/>
            <person name="Harayama S."/>
        </authorList>
    </citation>
    <scope>NUCLEOTIDE SEQUENCE [LARGE SCALE GENOMIC DNA]</scope>
    <source>
        <strain>B4</strain>
    </source>
</reference>
<sequence length="214" mass="21892">MTSFVLASASPARLAVLRSAGVEPVVRVSGVDEDALIAALGADAAPEHVVTELARAKAKDVLPVLARDGISDAVIVGCDSMLLIDGALQGKPGTVDVARERWSSMAGRSATLLTGHSVLRITEGAVVGDAHDHSATVVHFASPPDADLEAYLATGEPLQVAGAFTLDSLGGWFVDRIEGDPSSVIGIGLPLVRRLLADVGVGVAELWATSGRGD</sequence>
<comment type="function">
    <text evidence="1">Nucleoside triphosphate pyrophosphatase. May have a dual role in cell division arrest and in preventing the incorporation of modified nucleotides into cellular nucleic acids.</text>
</comment>
<comment type="catalytic activity">
    <reaction evidence="1">
        <text>a ribonucleoside 5'-triphosphate + H2O = a ribonucleoside 5'-phosphate + diphosphate + H(+)</text>
        <dbReference type="Rhea" id="RHEA:23996"/>
        <dbReference type="ChEBI" id="CHEBI:15377"/>
        <dbReference type="ChEBI" id="CHEBI:15378"/>
        <dbReference type="ChEBI" id="CHEBI:33019"/>
        <dbReference type="ChEBI" id="CHEBI:58043"/>
        <dbReference type="ChEBI" id="CHEBI:61557"/>
        <dbReference type="EC" id="3.6.1.9"/>
    </reaction>
</comment>
<comment type="catalytic activity">
    <reaction evidence="1">
        <text>a 2'-deoxyribonucleoside 5'-triphosphate + H2O = a 2'-deoxyribonucleoside 5'-phosphate + diphosphate + H(+)</text>
        <dbReference type="Rhea" id="RHEA:44644"/>
        <dbReference type="ChEBI" id="CHEBI:15377"/>
        <dbReference type="ChEBI" id="CHEBI:15378"/>
        <dbReference type="ChEBI" id="CHEBI:33019"/>
        <dbReference type="ChEBI" id="CHEBI:61560"/>
        <dbReference type="ChEBI" id="CHEBI:65317"/>
        <dbReference type="EC" id="3.6.1.9"/>
    </reaction>
</comment>
<comment type="cofactor">
    <cofactor evidence="1">
        <name>a divalent metal cation</name>
        <dbReference type="ChEBI" id="CHEBI:60240"/>
    </cofactor>
</comment>
<comment type="subcellular location">
    <subcellularLocation>
        <location evidence="1">Cytoplasm</location>
    </subcellularLocation>
</comment>
<comment type="similarity">
    <text evidence="1">Belongs to the Maf family.</text>
</comment>
<gene>
    <name type="ordered locus">ROP_63540</name>
</gene>
<feature type="chain" id="PRO_1000146298" description="Nucleoside triphosphate pyrophosphatase">
    <location>
        <begin position="1"/>
        <end position="214"/>
    </location>
</feature>
<feature type="active site" description="Proton acceptor" evidence="1">
    <location>
        <position position="79"/>
    </location>
</feature>
<evidence type="ECO:0000255" key="1">
    <source>
        <dbReference type="HAMAP-Rule" id="MF_00528"/>
    </source>
</evidence>